<accession>Q8K977</accession>
<keyword id="KW-0067">ATP-binding</keyword>
<keyword id="KW-0963">Cytoplasm</keyword>
<keyword id="KW-0547">Nucleotide-binding</keyword>
<keyword id="KW-0548">Nucleotidyltransferase</keyword>
<keyword id="KW-0808">Transferase</keyword>
<keyword id="KW-0819">tRNA processing</keyword>
<protein>
    <recommendedName>
        <fullName evidence="1">Threonylcarbamoyl-AMP synthase</fullName>
        <shortName evidence="1">TC-AMP synthase</shortName>
        <ecNumber evidence="1">2.7.7.87</ecNumber>
    </recommendedName>
    <alternativeName>
        <fullName evidence="1">L-threonylcarbamoyladenylate synthase</fullName>
    </alternativeName>
    <alternativeName>
        <fullName evidence="1">t(6)A37 threonylcarbamoyladenosine biosynthesis protein TsaC</fullName>
    </alternativeName>
    <alternativeName>
        <fullName evidence="1">tRNA threonylcarbamoyladenosine biosynthesis protein TsaC</fullName>
    </alternativeName>
</protein>
<evidence type="ECO:0000255" key="1">
    <source>
        <dbReference type="HAMAP-Rule" id="MF_01852"/>
    </source>
</evidence>
<name>TSAC_BUCAP</name>
<proteinExistence type="inferred from homology"/>
<organism>
    <name type="scientific">Buchnera aphidicola subsp. Schizaphis graminum (strain Sg)</name>
    <dbReference type="NCBI Taxonomy" id="198804"/>
    <lineage>
        <taxon>Bacteria</taxon>
        <taxon>Pseudomonadati</taxon>
        <taxon>Pseudomonadota</taxon>
        <taxon>Gammaproteobacteria</taxon>
        <taxon>Enterobacterales</taxon>
        <taxon>Erwiniaceae</taxon>
        <taxon>Buchnera</taxon>
    </lineage>
</organism>
<comment type="function">
    <text evidence="1">Required for the formation of a threonylcarbamoyl group on adenosine at position 37 (t(6)A37) in tRNAs that read codons beginning with adenine. Catalyzes the conversion of L-threonine, HCO(3)(-)/CO(2) and ATP to give threonylcarbamoyl-AMP (TC-AMP) as the acyladenylate intermediate, with the release of diphosphate.</text>
</comment>
<comment type="catalytic activity">
    <reaction evidence="1">
        <text>L-threonine + hydrogencarbonate + ATP = L-threonylcarbamoyladenylate + diphosphate + H2O</text>
        <dbReference type="Rhea" id="RHEA:36407"/>
        <dbReference type="ChEBI" id="CHEBI:15377"/>
        <dbReference type="ChEBI" id="CHEBI:17544"/>
        <dbReference type="ChEBI" id="CHEBI:30616"/>
        <dbReference type="ChEBI" id="CHEBI:33019"/>
        <dbReference type="ChEBI" id="CHEBI:57926"/>
        <dbReference type="ChEBI" id="CHEBI:73682"/>
        <dbReference type="EC" id="2.7.7.87"/>
    </reaction>
</comment>
<comment type="subcellular location">
    <subcellularLocation>
        <location evidence="1">Cytoplasm</location>
    </subcellularLocation>
</comment>
<comment type="similarity">
    <text evidence="1">Belongs to the SUA5 family. TsaC subfamily.</text>
</comment>
<reference key="1">
    <citation type="journal article" date="2002" name="Science">
        <title>50 million years of genomic stasis in endosymbiotic bacteria.</title>
        <authorList>
            <person name="Tamas I."/>
            <person name="Klasson L."/>
            <person name="Canbaeck B."/>
            <person name="Naeslund A.K."/>
            <person name="Eriksson A.-S."/>
            <person name="Wernegreen J.J."/>
            <person name="Sandstroem J.P."/>
            <person name="Moran N.A."/>
            <person name="Andersson S.G.E."/>
        </authorList>
    </citation>
    <scope>NUCLEOTIDE SEQUENCE [LARGE SCALE GENOMIC DNA]</scope>
    <source>
        <strain>Sg</strain>
    </source>
</reference>
<gene>
    <name evidence="1" type="primary">tsaC</name>
    <name type="synonym">rimN</name>
    <name type="ordered locus">BUsg_475</name>
</gene>
<dbReference type="EC" id="2.7.7.87" evidence="1"/>
<dbReference type="EMBL" id="AE013218">
    <property type="protein sequence ID" value="AAM68018.1"/>
    <property type="molecule type" value="Genomic_DNA"/>
</dbReference>
<dbReference type="RefSeq" id="WP_011053984.1">
    <property type="nucleotide sequence ID" value="NC_004061.1"/>
</dbReference>
<dbReference type="SMR" id="Q8K977"/>
<dbReference type="STRING" id="198804.BUsg_475"/>
<dbReference type="GeneID" id="93003950"/>
<dbReference type="KEGG" id="bas:BUsg_475"/>
<dbReference type="eggNOG" id="COG0009">
    <property type="taxonomic scope" value="Bacteria"/>
</dbReference>
<dbReference type="HOGENOM" id="CLU_031397_6_0_6"/>
<dbReference type="Proteomes" id="UP000000416">
    <property type="component" value="Chromosome"/>
</dbReference>
<dbReference type="GO" id="GO:0005737">
    <property type="term" value="C:cytoplasm"/>
    <property type="evidence" value="ECO:0007669"/>
    <property type="project" value="UniProtKB-SubCell"/>
</dbReference>
<dbReference type="GO" id="GO:0005524">
    <property type="term" value="F:ATP binding"/>
    <property type="evidence" value="ECO:0007669"/>
    <property type="project" value="UniProtKB-UniRule"/>
</dbReference>
<dbReference type="GO" id="GO:0003725">
    <property type="term" value="F:double-stranded RNA binding"/>
    <property type="evidence" value="ECO:0007669"/>
    <property type="project" value="InterPro"/>
</dbReference>
<dbReference type="GO" id="GO:0061710">
    <property type="term" value="F:L-threonylcarbamoyladenylate synthase"/>
    <property type="evidence" value="ECO:0007669"/>
    <property type="project" value="UniProtKB-EC"/>
</dbReference>
<dbReference type="GO" id="GO:0000049">
    <property type="term" value="F:tRNA binding"/>
    <property type="evidence" value="ECO:0007669"/>
    <property type="project" value="TreeGrafter"/>
</dbReference>
<dbReference type="GO" id="GO:0006450">
    <property type="term" value="P:regulation of translational fidelity"/>
    <property type="evidence" value="ECO:0007669"/>
    <property type="project" value="TreeGrafter"/>
</dbReference>
<dbReference type="GO" id="GO:0002949">
    <property type="term" value="P:tRNA threonylcarbamoyladenosine modification"/>
    <property type="evidence" value="ECO:0007669"/>
    <property type="project" value="UniProtKB-UniRule"/>
</dbReference>
<dbReference type="FunFam" id="3.90.870.10:FF:000004">
    <property type="entry name" value="Threonylcarbamoyl-AMP synthase"/>
    <property type="match status" value="1"/>
</dbReference>
<dbReference type="Gene3D" id="3.90.870.10">
    <property type="entry name" value="DHBP synthase"/>
    <property type="match status" value="1"/>
</dbReference>
<dbReference type="HAMAP" id="MF_01852">
    <property type="entry name" value="TsaC"/>
    <property type="match status" value="1"/>
</dbReference>
<dbReference type="InterPro" id="IPR017945">
    <property type="entry name" value="DHBP_synth_RibB-like_a/b_dom"/>
</dbReference>
<dbReference type="InterPro" id="IPR006070">
    <property type="entry name" value="Sua5-like_dom"/>
</dbReference>
<dbReference type="InterPro" id="IPR023535">
    <property type="entry name" value="TC-AMP_synthase"/>
</dbReference>
<dbReference type="InterPro" id="IPR050156">
    <property type="entry name" value="TC-AMP_synthase_SUA5"/>
</dbReference>
<dbReference type="PANTHER" id="PTHR17490">
    <property type="entry name" value="SUA5"/>
    <property type="match status" value="1"/>
</dbReference>
<dbReference type="PANTHER" id="PTHR17490:SF18">
    <property type="entry name" value="THREONYLCARBAMOYL-AMP SYNTHASE"/>
    <property type="match status" value="1"/>
</dbReference>
<dbReference type="Pfam" id="PF01300">
    <property type="entry name" value="Sua5_yciO_yrdC"/>
    <property type="match status" value="1"/>
</dbReference>
<dbReference type="SUPFAM" id="SSF55821">
    <property type="entry name" value="YrdC/RibB"/>
    <property type="match status" value="1"/>
</dbReference>
<dbReference type="PROSITE" id="PS51163">
    <property type="entry name" value="YRDC"/>
    <property type="match status" value="1"/>
</dbReference>
<sequence>MSKDYFLSSLIKCIRKLYDKKIIAYPTEAMFGLGCDPTSEKAVKRLLDLKKRSIKKGLILVASNYNQIKMYINESKLSAQQKKTMFFHWPGPYTFLVPANSLVPCWLTGQFDTIAVRISAHFSIIKLCNVFGKALVSTSANISNMSPCLTREDVLKDFGKDFPVLYGHIGNESHPSKIINIVNGKLIRYV</sequence>
<feature type="chain" id="PRO_0000202022" description="Threonylcarbamoyl-AMP synthase">
    <location>
        <begin position="1"/>
        <end position="190"/>
    </location>
</feature>
<feature type="domain" description="YrdC-like" evidence="1">
    <location>
        <begin position="7"/>
        <end position="190"/>
    </location>
</feature>